<name>RBFA_LEIXX</name>
<protein>
    <recommendedName>
        <fullName evidence="1">Ribosome-binding factor A</fullName>
    </recommendedName>
</protein>
<dbReference type="EMBL" id="AE016822">
    <property type="protein sequence ID" value="AAT88647.1"/>
    <property type="molecule type" value="Genomic_DNA"/>
</dbReference>
<dbReference type="RefSeq" id="WP_011185646.1">
    <property type="nucleotide sequence ID" value="NC_006087.1"/>
</dbReference>
<dbReference type="SMR" id="Q6AG48"/>
<dbReference type="STRING" id="281090.Lxx07160"/>
<dbReference type="KEGG" id="lxx:Lxx07160"/>
<dbReference type="eggNOG" id="COG0858">
    <property type="taxonomic scope" value="Bacteria"/>
</dbReference>
<dbReference type="HOGENOM" id="CLU_089475_0_0_11"/>
<dbReference type="Proteomes" id="UP000001306">
    <property type="component" value="Chromosome"/>
</dbReference>
<dbReference type="GO" id="GO:0005829">
    <property type="term" value="C:cytosol"/>
    <property type="evidence" value="ECO:0007669"/>
    <property type="project" value="TreeGrafter"/>
</dbReference>
<dbReference type="GO" id="GO:0043024">
    <property type="term" value="F:ribosomal small subunit binding"/>
    <property type="evidence" value="ECO:0007669"/>
    <property type="project" value="TreeGrafter"/>
</dbReference>
<dbReference type="GO" id="GO:0030490">
    <property type="term" value="P:maturation of SSU-rRNA"/>
    <property type="evidence" value="ECO:0007669"/>
    <property type="project" value="UniProtKB-UniRule"/>
</dbReference>
<dbReference type="Gene3D" id="3.30.300.20">
    <property type="match status" value="1"/>
</dbReference>
<dbReference type="HAMAP" id="MF_00003">
    <property type="entry name" value="RbfA"/>
    <property type="match status" value="1"/>
</dbReference>
<dbReference type="InterPro" id="IPR015946">
    <property type="entry name" value="KH_dom-like_a/b"/>
</dbReference>
<dbReference type="InterPro" id="IPR000238">
    <property type="entry name" value="RbfA"/>
</dbReference>
<dbReference type="InterPro" id="IPR023799">
    <property type="entry name" value="RbfA_dom_sf"/>
</dbReference>
<dbReference type="NCBIfam" id="TIGR00082">
    <property type="entry name" value="rbfA"/>
    <property type="match status" value="1"/>
</dbReference>
<dbReference type="PANTHER" id="PTHR33515">
    <property type="entry name" value="RIBOSOME-BINDING FACTOR A, CHLOROPLASTIC-RELATED"/>
    <property type="match status" value="1"/>
</dbReference>
<dbReference type="PANTHER" id="PTHR33515:SF1">
    <property type="entry name" value="RIBOSOME-BINDING FACTOR A, CHLOROPLASTIC-RELATED"/>
    <property type="match status" value="1"/>
</dbReference>
<dbReference type="Pfam" id="PF02033">
    <property type="entry name" value="RBFA"/>
    <property type="match status" value="1"/>
</dbReference>
<dbReference type="SUPFAM" id="SSF89919">
    <property type="entry name" value="Ribosome-binding factor A, RbfA"/>
    <property type="match status" value="1"/>
</dbReference>
<proteinExistence type="inferred from homology"/>
<accession>Q6AG48</accession>
<feature type="chain" id="PRO_0000102683" description="Ribosome-binding factor A">
    <location>
        <begin position="1"/>
        <end position="142"/>
    </location>
</feature>
<reference key="1">
    <citation type="journal article" date="2004" name="Mol. Plant Microbe Interact.">
        <title>The genome sequence of the Gram-positive sugarcane pathogen Leifsonia xyli subsp. xyli.</title>
        <authorList>
            <person name="Monteiro-Vitorello C.B."/>
            <person name="Camargo L.E.A."/>
            <person name="Van Sluys M.A."/>
            <person name="Kitajima J.P."/>
            <person name="Truffi D."/>
            <person name="do Amaral A.M."/>
            <person name="Harakava R."/>
            <person name="de Oliveira J.C.F."/>
            <person name="Wood D."/>
            <person name="de Oliveira M.C."/>
            <person name="Miyaki C.Y."/>
            <person name="Takita M.A."/>
            <person name="da Silva A.C.R."/>
            <person name="Furlan L.R."/>
            <person name="Carraro D.M."/>
            <person name="Camarotte G."/>
            <person name="Almeida N.F. Jr."/>
            <person name="Carrer H."/>
            <person name="Coutinho L.L."/>
            <person name="El-Dorry H.A."/>
            <person name="Ferro M.I.T."/>
            <person name="Gagliardi P.R."/>
            <person name="Giglioti E."/>
            <person name="Goldman M.H.S."/>
            <person name="Goldman G.H."/>
            <person name="Kimura E.T."/>
            <person name="Ferro E.S."/>
            <person name="Kuramae E.E."/>
            <person name="Lemos E.G.M."/>
            <person name="Lemos M.V.F."/>
            <person name="Mauro S.M.Z."/>
            <person name="Machado M.A."/>
            <person name="Marino C.L."/>
            <person name="Menck C.F."/>
            <person name="Nunes L.R."/>
            <person name="Oliveira R.C."/>
            <person name="Pereira G.G."/>
            <person name="Siqueira W."/>
            <person name="de Souza A.A."/>
            <person name="Tsai S.M."/>
            <person name="Zanca A.S."/>
            <person name="Simpson A.J.G."/>
            <person name="Brumbley S.M."/>
            <person name="Setubal J.C."/>
        </authorList>
    </citation>
    <scope>NUCLEOTIDE SEQUENCE [LARGE SCALE GENOMIC DNA]</scope>
    <source>
        <strain>CTCB07</strain>
    </source>
</reference>
<keyword id="KW-0963">Cytoplasm</keyword>
<keyword id="KW-1185">Reference proteome</keyword>
<keyword id="KW-0690">Ribosome biogenesis</keyword>
<organism>
    <name type="scientific">Leifsonia xyli subsp. xyli (strain CTCB07)</name>
    <dbReference type="NCBI Taxonomy" id="281090"/>
    <lineage>
        <taxon>Bacteria</taxon>
        <taxon>Bacillati</taxon>
        <taxon>Actinomycetota</taxon>
        <taxon>Actinomycetes</taxon>
        <taxon>Micrococcales</taxon>
        <taxon>Microbacteriaceae</taxon>
        <taxon>Leifsonia</taxon>
    </lineage>
</organism>
<evidence type="ECO:0000255" key="1">
    <source>
        <dbReference type="HAMAP-Rule" id="MF_00003"/>
    </source>
</evidence>
<sequence>MADPARARKLADRIKVIVAERLDRGLRDPRLGFVTITDVQVTGDLQHATVFYTVYGTDQERADTAAALTAATGMLRSEVGKNITARLTPTLQFQLDAIPENAAHIEDLLRQARDHDTEVAGLAEGAAYAGEQDPYVKPREAN</sequence>
<comment type="function">
    <text evidence="1">One of several proteins that assist in the late maturation steps of the functional core of the 30S ribosomal subunit. Associates with free 30S ribosomal subunits (but not with 30S subunits that are part of 70S ribosomes or polysomes). Required for efficient processing of 16S rRNA. May interact with the 5'-terminal helix region of 16S rRNA.</text>
</comment>
<comment type="subunit">
    <text evidence="1">Monomer. Binds 30S ribosomal subunits, but not 50S ribosomal subunits or 70S ribosomes.</text>
</comment>
<comment type="subcellular location">
    <subcellularLocation>
        <location evidence="1">Cytoplasm</location>
    </subcellularLocation>
</comment>
<comment type="similarity">
    <text evidence="1">Belongs to the RbfA family.</text>
</comment>
<gene>
    <name evidence="1" type="primary">rbfA</name>
    <name type="ordered locus">Lxx07160</name>
</gene>